<evidence type="ECO:0000255" key="1">
    <source>
        <dbReference type="HAMAP-Rule" id="MF_00416"/>
    </source>
</evidence>
<name>FLGI_ECO81</name>
<keyword id="KW-0975">Bacterial flagellum</keyword>
<keyword id="KW-0574">Periplasm</keyword>
<keyword id="KW-0732">Signal</keyword>
<reference key="1">
    <citation type="journal article" date="2009" name="PLoS Genet.">
        <title>Organised genome dynamics in the Escherichia coli species results in highly diverse adaptive paths.</title>
        <authorList>
            <person name="Touchon M."/>
            <person name="Hoede C."/>
            <person name="Tenaillon O."/>
            <person name="Barbe V."/>
            <person name="Baeriswyl S."/>
            <person name="Bidet P."/>
            <person name="Bingen E."/>
            <person name="Bonacorsi S."/>
            <person name="Bouchier C."/>
            <person name="Bouvet O."/>
            <person name="Calteau A."/>
            <person name="Chiapello H."/>
            <person name="Clermont O."/>
            <person name="Cruveiller S."/>
            <person name="Danchin A."/>
            <person name="Diard M."/>
            <person name="Dossat C."/>
            <person name="Karoui M.E."/>
            <person name="Frapy E."/>
            <person name="Garry L."/>
            <person name="Ghigo J.M."/>
            <person name="Gilles A.M."/>
            <person name="Johnson J."/>
            <person name="Le Bouguenec C."/>
            <person name="Lescat M."/>
            <person name="Mangenot S."/>
            <person name="Martinez-Jehanne V."/>
            <person name="Matic I."/>
            <person name="Nassif X."/>
            <person name="Oztas S."/>
            <person name="Petit M.A."/>
            <person name="Pichon C."/>
            <person name="Rouy Z."/>
            <person name="Ruf C.S."/>
            <person name="Schneider D."/>
            <person name="Tourret J."/>
            <person name="Vacherie B."/>
            <person name="Vallenet D."/>
            <person name="Medigue C."/>
            <person name="Rocha E.P.C."/>
            <person name="Denamur E."/>
        </authorList>
    </citation>
    <scope>NUCLEOTIDE SEQUENCE [LARGE SCALE GENOMIC DNA]</scope>
    <source>
        <strain>ED1a</strain>
    </source>
</reference>
<sequence length="365" mass="38182">MIKFLSALILLLVITAAQAERIRDLTSVQGVRQNSLIGYGLVVGLDGTGDQTTQTPFTTQTLNNMLSQLGITVPTGTNMQLKNVAAVMVTASLPPFGRQGQTIDVVVSSMGNAKSLRGGTLLMTPLKGVDSQVYALAQGNILVGGAGASAGGSSVQVNQLNGGRITNGAVIERELPSQFGVGNTLNLQLNDEDFSMAQQIADTINRVRGYGSATALDARTIQVRVPSGNSSQVRFLADIQNMQVNVTPQDAKVVINSRTGSVVMNREVTLDSCAVAQGNLSVTVNRQANVSQPDTPFGGGQTVVTPQTQIDLRQSGGSLQSVRSSASLNNVVRALNALGATPMDLMSILQSMQSAGCLRAKLEII</sequence>
<comment type="function">
    <text evidence="1">Assembles around the rod to form the L-ring and probably protects the motor/basal body from shearing forces during rotation.</text>
</comment>
<comment type="subunit">
    <text evidence="1">The basal body constitutes a major portion of the flagellar organelle and consists of four rings (L,P,S, and M) mounted on a central rod.</text>
</comment>
<comment type="subcellular location">
    <subcellularLocation>
        <location evidence="1">Periplasm</location>
    </subcellularLocation>
    <subcellularLocation>
        <location evidence="1">Bacterial flagellum basal body</location>
    </subcellularLocation>
</comment>
<comment type="similarity">
    <text evidence="1">Belongs to the FlgI family.</text>
</comment>
<gene>
    <name evidence="1" type="primary">flgI</name>
    <name type="ordered locus">ECED1_1224</name>
</gene>
<feature type="signal peptide" evidence="1">
    <location>
        <begin position="1"/>
        <end position="19"/>
    </location>
</feature>
<feature type="chain" id="PRO_1000134840" description="Flagellar P-ring protein">
    <location>
        <begin position="20"/>
        <end position="365"/>
    </location>
</feature>
<proteinExistence type="inferred from homology"/>
<protein>
    <recommendedName>
        <fullName evidence="1">Flagellar P-ring protein</fullName>
    </recommendedName>
    <alternativeName>
        <fullName evidence="1">Basal body P-ring protein</fullName>
    </alternativeName>
</protein>
<organism>
    <name type="scientific">Escherichia coli O81 (strain ED1a)</name>
    <dbReference type="NCBI Taxonomy" id="585397"/>
    <lineage>
        <taxon>Bacteria</taxon>
        <taxon>Pseudomonadati</taxon>
        <taxon>Pseudomonadota</taxon>
        <taxon>Gammaproteobacteria</taxon>
        <taxon>Enterobacterales</taxon>
        <taxon>Enterobacteriaceae</taxon>
        <taxon>Escherichia</taxon>
    </lineage>
</organism>
<accession>B7MTL1</accession>
<dbReference type="EMBL" id="CU928162">
    <property type="protein sequence ID" value="CAR07425.1"/>
    <property type="molecule type" value="Genomic_DNA"/>
</dbReference>
<dbReference type="RefSeq" id="WP_000589300.1">
    <property type="nucleotide sequence ID" value="NC_011745.1"/>
</dbReference>
<dbReference type="SMR" id="B7MTL1"/>
<dbReference type="KEGG" id="ecq:ECED1_1224"/>
<dbReference type="HOGENOM" id="CLU_045235_1_0_6"/>
<dbReference type="Proteomes" id="UP000000748">
    <property type="component" value="Chromosome"/>
</dbReference>
<dbReference type="GO" id="GO:0009428">
    <property type="term" value="C:bacterial-type flagellum basal body, distal rod, P ring"/>
    <property type="evidence" value="ECO:0007669"/>
    <property type="project" value="InterPro"/>
</dbReference>
<dbReference type="GO" id="GO:0030288">
    <property type="term" value="C:outer membrane-bounded periplasmic space"/>
    <property type="evidence" value="ECO:0007669"/>
    <property type="project" value="InterPro"/>
</dbReference>
<dbReference type="GO" id="GO:0005198">
    <property type="term" value="F:structural molecule activity"/>
    <property type="evidence" value="ECO:0007669"/>
    <property type="project" value="InterPro"/>
</dbReference>
<dbReference type="GO" id="GO:0071973">
    <property type="term" value="P:bacterial-type flagellum-dependent cell motility"/>
    <property type="evidence" value="ECO:0007669"/>
    <property type="project" value="InterPro"/>
</dbReference>
<dbReference type="HAMAP" id="MF_00416">
    <property type="entry name" value="FlgI"/>
    <property type="match status" value="1"/>
</dbReference>
<dbReference type="InterPro" id="IPR001782">
    <property type="entry name" value="Flag_FlgI"/>
</dbReference>
<dbReference type="NCBIfam" id="NF003676">
    <property type="entry name" value="PRK05303.1"/>
    <property type="match status" value="1"/>
</dbReference>
<dbReference type="PANTHER" id="PTHR30381">
    <property type="entry name" value="FLAGELLAR P-RING PERIPLASMIC PROTEIN FLGI"/>
    <property type="match status" value="1"/>
</dbReference>
<dbReference type="PANTHER" id="PTHR30381:SF0">
    <property type="entry name" value="FLAGELLAR P-RING PROTEIN"/>
    <property type="match status" value="1"/>
</dbReference>
<dbReference type="Pfam" id="PF02119">
    <property type="entry name" value="FlgI"/>
    <property type="match status" value="1"/>
</dbReference>
<dbReference type="PRINTS" id="PR01010">
    <property type="entry name" value="FLGPRINGFLGI"/>
</dbReference>